<evidence type="ECO:0000255" key="1">
    <source>
        <dbReference type="HAMAP-Rule" id="MF_00198"/>
    </source>
</evidence>
<evidence type="ECO:0000256" key="2">
    <source>
        <dbReference type="SAM" id="MobiDB-lite"/>
    </source>
</evidence>
<protein>
    <recommendedName>
        <fullName evidence="1">Polyamine aminopropyltransferase 2</fullName>
    </recommendedName>
    <alternativeName>
        <fullName evidence="1">Putrescine aminopropyltransferase</fullName>
        <shortName evidence="1">PAPT</shortName>
    </alternativeName>
    <alternativeName>
        <fullName evidence="1">Spermidine synthase</fullName>
        <shortName evidence="1">SPDS</shortName>
        <shortName evidence="1">SPDSY</shortName>
        <ecNumber evidence="1">2.5.1.16</ecNumber>
    </alternativeName>
</protein>
<reference key="1">
    <citation type="journal article" date="2003" name="Nature">
        <title>Genome sequence of Bacillus cereus and comparative analysis with Bacillus anthracis.</title>
        <authorList>
            <person name="Ivanova N."/>
            <person name="Sorokin A."/>
            <person name="Anderson I."/>
            <person name="Galleron N."/>
            <person name="Candelon B."/>
            <person name="Kapatral V."/>
            <person name="Bhattacharyya A."/>
            <person name="Reznik G."/>
            <person name="Mikhailova N."/>
            <person name="Lapidus A."/>
            <person name="Chu L."/>
            <person name="Mazur M."/>
            <person name="Goltsman E."/>
            <person name="Larsen N."/>
            <person name="D'Souza M."/>
            <person name="Walunas T."/>
            <person name="Grechkin Y."/>
            <person name="Pusch G."/>
            <person name="Haselkorn R."/>
            <person name="Fonstein M."/>
            <person name="Ehrlich S.D."/>
            <person name="Overbeek R."/>
            <person name="Kyrpides N.C."/>
        </authorList>
    </citation>
    <scope>NUCLEOTIDE SEQUENCE [LARGE SCALE GENOMIC DNA]</scope>
    <source>
        <strain>ATCC 14579 / DSM 31 / CCUG 7414 / JCM 2152 / NBRC 15305 / NCIMB 9373 / NCTC 2599 / NRRL B-3711</strain>
    </source>
</reference>
<name>SPEE2_BACCR</name>
<gene>
    <name evidence="1" type="primary">speE2</name>
    <name type="ordered locus">BC_5213</name>
</gene>
<organism>
    <name type="scientific">Bacillus cereus (strain ATCC 14579 / DSM 31 / CCUG 7414 / JCM 2152 / NBRC 15305 / NCIMB 9373 / NCTC 2599 / NRRL B-3711)</name>
    <dbReference type="NCBI Taxonomy" id="226900"/>
    <lineage>
        <taxon>Bacteria</taxon>
        <taxon>Bacillati</taxon>
        <taxon>Bacillota</taxon>
        <taxon>Bacilli</taxon>
        <taxon>Bacillales</taxon>
        <taxon>Bacillaceae</taxon>
        <taxon>Bacillus</taxon>
        <taxon>Bacillus cereus group</taxon>
    </lineage>
</organism>
<sequence>MPKHRKQSKIKIYRITSYKKDKRSELDSDKFELEQQDKHDIQDKQDKQDEQNKQDKQVQSENVTIVPTDSHSLDVWDEISLKEIQAGEHTSLFEEKSNYQNINLVQVNDVRLYLDKQLQFSSVDEQIYHEALVHPIMAKVIDPKRVLILGGGDGLALREVLKYETVLHVDLVDLDEAMINMARNVPEIVSLNKNAFFDNRVNVHVCDAKEFLNSPSSLYDVIIIDFPDPATELLSTLYTSELFARIATFLTEDGAFVCQSNSPADAPLVYWSIGNTIEHAGLTVKSYHTIVPSFGTDWGFHLATNSAHVLDQIEQLYVVPTPRTLPALLFPLFQFKEEHLEQRNLALLNSESNLILHQCYKQEMKF</sequence>
<proteinExistence type="inferred from homology"/>
<dbReference type="EC" id="2.5.1.16" evidence="1"/>
<dbReference type="EMBL" id="AE016877">
    <property type="protein sequence ID" value="AAP12077.1"/>
    <property type="molecule type" value="Genomic_DNA"/>
</dbReference>
<dbReference type="RefSeq" id="NP_834876.1">
    <property type="nucleotide sequence ID" value="NC_004722.1"/>
</dbReference>
<dbReference type="RefSeq" id="WP_001123965.1">
    <property type="nucleotide sequence ID" value="NZ_CP138336.1"/>
</dbReference>
<dbReference type="SMR" id="Q815E8"/>
<dbReference type="STRING" id="226900.BC_5213"/>
<dbReference type="KEGG" id="bce:BC5213"/>
<dbReference type="PATRIC" id="fig|226900.8.peg.5377"/>
<dbReference type="HOGENOM" id="CLU_039263_0_0_9"/>
<dbReference type="OrthoDB" id="9793120at2"/>
<dbReference type="UniPathway" id="UPA00248">
    <property type="reaction ID" value="UER00314"/>
</dbReference>
<dbReference type="Proteomes" id="UP000001417">
    <property type="component" value="Chromosome"/>
</dbReference>
<dbReference type="GO" id="GO:0005737">
    <property type="term" value="C:cytoplasm"/>
    <property type="evidence" value="ECO:0007669"/>
    <property type="project" value="UniProtKB-SubCell"/>
</dbReference>
<dbReference type="GO" id="GO:0004766">
    <property type="term" value="F:spermidine synthase activity"/>
    <property type="evidence" value="ECO:0007669"/>
    <property type="project" value="UniProtKB-UniRule"/>
</dbReference>
<dbReference type="GO" id="GO:0010487">
    <property type="term" value="F:thermospermine synthase activity"/>
    <property type="evidence" value="ECO:0007669"/>
    <property type="project" value="UniProtKB-ARBA"/>
</dbReference>
<dbReference type="GO" id="GO:0006596">
    <property type="term" value="P:polyamine biosynthetic process"/>
    <property type="evidence" value="ECO:0000318"/>
    <property type="project" value="GO_Central"/>
</dbReference>
<dbReference type="GO" id="GO:0008295">
    <property type="term" value="P:spermidine biosynthetic process"/>
    <property type="evidence" value="ECO:0007669"/>
    <property type="project" value="UniProtKB-UniRule"/>
</dbReference>
<dbReference type="CDD" id="cd02440">
    <property type="entry name" value="AdoMet_MTases"/>
    <property type="match status" value="1"/>
</dbReference>
<dbReference type="FunFam" id="3.40.50.150:FF:000088">
    <property type="entry name" value="Polyamine aminopropyltransferase"/>
    <property type="match status" value="1"/>
</dbReference>
<dbReference type="Gene3D" id="3.40.50.150">
    <property type="entry name" value="Vaccinia Virus protein VP39"/>
    <property type="match status" value="1"/>
</dbReference>
<dbReference type="HAMAP" id="MF_00198">
    <property type="entry name" value="Spermidine_synth"/>
    <property type="match status" value="1"/>
</dbReference>
<dbReference type="InterPro" id="IPR030374">
    <property type="entry name" value="PABS"/>
</dbReference>
<dbReference type="InterPro" id="IPR030373">
    <property type="entry name" value="PABS_CS"/>
</dbReference>
<dbReference type="InterPro" id="IPR029063">
    <property type="entry name" value="SAM-dependent_MTases_sf"/>
</dbReference>
<dbReference type="InterPro" id="IPR001045">
    <property type="entry name" value="Spermi_synthase"/>
</dbReference>
<dbReference type="NCBIfam" id="NF002435">
    <property type="entry name" value="PRK01581.1"/>
    <property type="match status" value="1"/>
</dbReference>
<dbReference type="PANTHER" id="PTHR43317">
    <property type="entry name" value="THERMOSPERMINE SYNTHASE ACAULIS5"/>
    <property type="match status" value="1"/>
</dbReference>
<dbReference type="PANTHER" id="PTHR43317:SF1">
    <property type="entry name" value="THERMOSPERMINE SYNTHASE ACAULIS5"/>
    <property type="match status" value="1"/>
</dbReference>
<dbReference type="Pfam" id="PF01564">
    <property type="entry name" value="Spermine_synth"/>
    <property type="match status" value="1"/>
</dbReference>
<dbReference type="SUPFAM" id="SSF53335">
    <property type="entry name" value="S-adenosyl-L-methionine-dependent methyltransferases"/>
    <property type="match status" value="1"/>
</dbReference>
<dbReference type="PROSITE" id="PS01330">
    <property type="entry name" value="PABS_1"/>
    <property type="match status" value="1"/>
</dbReference>
<dbReference type="PROSITE" id="PS51006">
    <property type="entry name" value="PABS_2"/>
    <property type="match status" value="1"/>
</dbReference>
<keyword id="KW-0963">Cytoplasm</keyword>
<keyword id="KW-0620">Polyamine biosynthesis</keyword>
<keyword id="KW-1185">Reference proteome</keyword>
<keyword id="KW-0745">Spermidine biosynthesis</keyword>
<keyword id="KW-0808">Transferase</keyword>
<accession>Q815E8</accession>
<comment type="function">
    <text evidence="1">Catalyzes the irreversible transfer of a propylamine group from the amino donor S-adenosylmethioninamine (decarboxy-AdoMet) to putrescine (1,4-diaminobutane) to yield spermidine.</text>
</comment>
<comment type="catalytic activity">
    <reaction evidence="1">
        <text>S-adenosyl 3-(methylsulfanyl)propylamine + putrescine = S-methyl-5'-thioadenosine + spermidine + H(+)</text>
        <dbReference type="Rhea" id="RHEA:12721"/>
        <dbReference type="ChEBI" id="CHEBI:15378"/>
        <dbReference type="ChEBI" id="CHEBI:17509"/>
        <dbReference type="ChEBI" id="CHEBI:57443"/>
        <dbReference type="ChEBI" id="CHEBI:57834"/>
        <dbReference type="ChEBI" id="CHEBI:326268"/>
        <dbReference type="EC" id="2.5.1.16"/>
    </reaction>
</comment>
<comment type="pathway">
    <text evidence="1">Amine and polyamine biosynthesis; spermidine biosynthesis; spermidine from putrescine: step 1/1.</text>
</comment>
<comment type="subunit">
    <text evidence="1">Homodimer or homotetramer.</text>
</comment>
<comment type="subcellular location">
    <subcellularLocation>
        <location evidence="1">Cytoplasm</location>
    </subcellularLocation>
</comment>
<comment type="similarity">
    <text evidence="1">Belongs to the spermidine/spermine synthase family.</text>
</comment>
<feature type="chain" id="PRO_0000156468" description="Polyamine aminopropyltransferase 2">
    <location>
        <begin position="1"/>
        <end position="366"/>
    </location>
</feature>
<feature type="domain" description="PABS" evidence="1">
    <location>
        <begin position="74"/>
        <end position="305"/>
    </location>
</feature>
<feature type="region of interest" description="Disordered" evidence="2">
    <location>
        <begin position="20"/>
        <end position="61"/>
    </location>
</feature>
<feature type="compositionally biased region" description="Basic and acidic residues" evidence="2">
    <location>
        <begin position="20"/>
        <end position="58"/>
    </location>
</feature>
<feature type="active site" description="Proton acceptor" evidence="1">
    <location>
        <position position="225"/>
    </location>
</feature>
<feature type="binding site" evidence="1">
    <location>
        <position position="100"/>
    </location>
    <ligand>
        <name>S-methyl-5'-thioadenosine</name>
        <dbReference type="ChEBI" id="CHEBI:17509"/>
    </ligand>
</feature>
<feature type="binding site" evidence="1">
    <location>
        <position position="129"/>
    </location>
    <ligand>
        <name>spermidine</name>
        <dbReference type="ChEBI" id="CHEBI:57834"/>
    </ligand>
</feature>
<feature type="binding site" evidence="1">
    <location>
        <position position="153"/>
    </location>
    <ligand>
        <name>spermidine</name>
        <dbReference type="ChEBI" id="CHEBI:57834"/>
    </ligand>
</feature>
<feature type="binding site" evidence="1">
    <location>
        <position position="173"/>
    </location>
    <ligand>
        <name>S-methyl-5'-thioadenosine</name>
        <dbReference type="ChEBI" id="CHEBI:17509"/>
    </ligand>
</feature>
<feature type="binding site" evidence="1">
    <location>
        <begin position="207"/>
        <end position="208"/>
    </location>
    <ligand>
        <name>S-methyl-5'-thioadenosine</name>
        <dbReference type="ChEBI" id="CHEBI:17509"/>
    </ligand>
</feature>